<name>AFG2_SCHPO</name>
<reference key="1">
    <citation type="journal article" date="2002" name="Nature">
        <title>The genome sequence of Schizosaccharomyces pombe.</title>
        <authorList>
            <person name="Wood V."/>
            <person name="Gwilliam R."/>
            <person name="Rajandream M.A."/>
            <person name="Lyne M.H."/>
            <person name="Lyne R."/>
            <person name="Stewart A."/>
            <person name="Sgouros J.G."/>
            <person name="Peat N."/>
            <person name="Hayles J."/>
            <person name="Baker S.G."/>
            <person name="Basham D."/>
            <person name="Bowman S."/>
            <person name="Brooks K."/>
            <person name="Brown D."/>
            <person name="Brown S."/>
            <person name="Chillingworth T."/>
            <person name="Churcher C.M."/>
            <person name="Collins M."/>
            <person name="Connor R."/>
            <person name="Cronin A."/>
            <person name="Davis P."/>
            <person name="Feltwell T."/>
            <person name="Fraser A."/>
            <person name="Gentles S."/>
            <person name="Goble A."/>
            <person name="Hamlin N."/>
            <person name="Harris D.E."/>
            <person name="Hidalgo J."/>
            <person name="Hodgson G."/>
            <person name="Holroyd S."/>
            <person name="Hornsby T."/>
            <person name="Howarth S."/>
            <person name="Huckle E.J."/>
            <person name="Hunt S."/>
            <person name="Jagels K."/>
            <person name="James K.D."/>
            <person name="Jones L."/>
            <person name="Jones M."/>
            <person name="Leather S."/>
            <person name="McDonald S."/>
            <person name="McLean J."/>
            <person name="Mooney P."/>
            <person name="Moule S."/>
            <person name="Mungall K.L."/>
            <person name="Murphy L.D."/>
            <person name="Niblett D."/>
            <person name="Odell C."/>
            <person name="Oliver K."/>
            <person name="O'Neil S."/>
            <person name="Pearson D."/>
            <person name="Quail M.A."/>
            <person name="Rabbinowitsch E."/>
            <person name="Rutherford K.M."/>
            <person name="Rutter S."/>
            <person name="Saunders D."/>
            <person name="Seeger K."/>
            <person name="Sharp S."/>
            <person name="Skelton J."/>
            <person name="Simmonds M.N."/>
            <person name="Squares R."/>
            <person name="Squares S."/>
            <person name="Stevens K."/>
            <person name="Taylor K."/>
            <person name="Taylor R.G."/>
            <person name="Tivey A."/>
            <person name="Walsh S.V."/>
            <person name="Warren T."/>
            <person name="Whitehead S."/>
            <person name="Woodward J.R."/>
            <person name="Volckaert G."/>
            <person name="Aert R."/>
            <person name="Robben J."/>
            <person name="Grymonprez B."/>
            <person name="Weltjens I."/>
            <person name="Vanstreels E."/>
            <person name="Rieger M."/>
            <person name="Schaefer M."/>
            <person name="Mueller-Auer S."/>
            <person name="Gabel C."/>
            <person name="Fuchs M."/>
            <person name="Duesterhoeft A."/>
            <person name="Fritzc C."/>
            <person name="Holzer E."/>
            <person name="Moestl D."/>
            <person name="Hilbert H."/>
            <person name="Borzym K."/>
            <person name="Langer I."/>
            <person name="Beck A."/>
            <person name="Lehrach H."/>
            <person name="Reinhardt R."/>
            <person name="Pohl T.M."/>
            <person name="Eger P."/>
            <person name="Zimmermann W."/>
            <person name="Wedler H."/>
            <person name="Wambutt R."/>
            <person name="Purnelle B."/>
            <person name="Goffeau A."/>
            <person name="Cadieu E."/>
            <person name="Dreano S."/>
            <person name="Gloux S."/>
            <person name="Lelaure V."/>
            <person name="Mottier S."/>
            <person name="Galibert F."/>
            <person name="Aves S.J."/>
            <person name="Xiang Z."/>
            <person name="Hunt C."/>
            <person name="Moore K."/>
            <person name="Hurst S.M."/>
            <person name="Lucas M."/>
            <person name="Rochet M."/>
            <person name="Gaillardin C."/>
            <person name="Tallada V.A."/>
            <person name="Garzon A."/>
            <person name="Thode G."/>
            <person name="Daga R.R."/>
            <person name="Cruzado L."/>
            <person name="Jimenez J."/>
            <person name="Sanchez M."/>
            <person name="del Rey F."/>
            <person name="Benito J."/>
            <person name="Dominguez A."/>
            <person name="Revuelta J.L."/>
            <person name="Moreno S."/>
            <person name="Armstrong J."/>
            <person name="Forsburg S.L."/>
            <person name="Cerutti L."/>
            <person name="Lowe T."/>
            <person name="McCombie W.R."/>
            <person name="Paulsen I."/>
            <person name="Potashkin J."/>
            <person name="Shpakovski G.V."/>
            <person name="Ussery D."/>
            <person name="Barrell B.G."/>
            <person name="Nurse P."/>
        </authorList>
    </citation>
    <scope>NUCLEOTIDE SEQUENCE [LARGE SCALE GENOMIC DNA]</scope>
    <source>
        <strain>972 / ATCC 24843</strain>
    </source>
</reference>
<reference key="2">
    <citation type="journal article" date="2006" name="Nat. Biotechnol.">
        <title>ORFeome cloning and global analysis of protein localization in the fission yeast Schizosaccharomyces pombe.</title>
        <authorList>
            <person name="Matsuyama A."/>
            <person name="Arai R."/>
            <person name="Yashiroda Y."/>
            <person name="Shirai A."/>
            <person name="Kamata A."/>
            <person name="Sekido S."/>
            <person name="Kobayashi Y."/>
            <person name="Hashimoto A."/>
            <person name="Hamamoto M."/>
            <person name="Hiraoka Y."/>
            <person name="Horinouchi S."/>
            <person name="Yoshida M."/>
        </authorList>
    </citation>
    <scope>SUBCELLULAR LOCATION [LARGE SCALE ANALYSIS]</scope>
</reference>
<dbReference type="EC" id="3.6.4.10" evidence="1"/>
<dbReference type="EMBL" id="CU329671">
    <property type="protein sequence ID" value="CAA18886.1"/>
    <property type="molecule type" value="Genomic_DNA"/>
</dbReference>
<dbReference type="PIR" id="T40537">
    <property type="entry name" value="T40537"/>
</dbReference>
<dbReference type="RefSeq" id="NP_596710.1">
    <property type="nucleotide sequence ID" value="NM_001022635.2"/>
</dbReference>
<dbReference type="SMR" id="O60058"/>
<dbReference type="BioGRID" id="277064">
    <property type="interactions" value="9"/>
</dbReference>
<dbReference type="FunCoup" id="O60058">
    <property type="interactions" value="540"/>
</dbReference>
<dbReference type="IntAct" id="O60058">
    <property type="interactions" value="2"/>
</dbReference>
<dbReference type="STRING" id="284812.O60058"/>
<dbReference type="PaxDb" id="4896-SPBC56F2.07c.1"/>
<dbReference type="EnsemblFungi" id="SPBC56F2.07c.1">
    <property type="protein sequence ID" value="SPBC56F2.07c.1:pep"/>
    <property type="gene ID" value="SPBC56F2.07c"/>
</dbReference>
<dbReference type="KEGG" id="spo:2540537"/>
<dbReference type="PomBase" id="SPBC56F2.07c"/>
<dbReference type="VEuPathDB" id="FungiDB:SPBC56F2.07c"/>
<dbReference type="eggNOG" id="KOG0730">
    <property type="taxonomic scope" value="Eukaryota"/>
</dbReference>
<dbReference type="HOGENOM" id="CLU_000688_12_3_1"/>
<dbReference type="InParanoid" id="O60058"/>
<dbReference type="PhylomeDB" id="O60058"/>
<dbReference type="PRO" id="PR:O60058"/>
<dbReference type="Proteomes" id="UP000002485">
    <property type="component" value="Chromosome II"/>
</dbReference>
<dbReference type="GO" id="GO:0005737">
    <property type="term" value="C:cytoplasm"/>
    <property type="evidence" value="ECO:0000318"/>
    <property type="project" value="GO_Central"/>
</dbReference>
<dbReference type="GO" id="GO:0005829">
    <property type="term" value="C:cytosol"/>
    <property type="evidence" value="ECO:0007005"/>
    <property type="project" value="PomBase"/>
</dbReference>
<dbReference type="GO" id="GO:0005524">
    <property type="term" value="F:ATP binding"/>
    <property type="evidence" value="ECO:0000255"/>
    <property type="project" value="PomBase"/>
</dbReference>
<dbReference type="GO" id="GO:0016887">
    <property type="term" value="F:ATP hydrolysis activity"/>
    <property type="evidence" value="ECO:0000318"/>
    <property type="project" value="GO_Central"/>
</dbReference>
<dbReference type="GO" id="GO:0042273">
    <property type="term" value="P:ribosomal large subunit biogenesis"/>
    <property type="evidence" value="ECO:0000318"/>
    <property type="project" value="GO_Central"/>
</dbReference>
<dbReference type="CDD" id="cd19503">
    <property type="entry name" value="RecA-like_CDC48_NLV2_r1-like"/>
    <property type="match status" value="1"/>
</dbReference>
<dbReference type="CDD" id="cd19511">
    <property type="entry name" value="RecA-like_CDC48_r2-like"/>
    <property type="match status" value="1"/>
</dbReference>
<dbReference type="FunFam" id="3.40.50.300:FF:000018">
    <property type="entry name" value="Cell division control 48"/>
    <property type="match status" value="1"/>
</dbReference>
<dbReference type="FunFam" id="1.10.8.60:FF:000071">
    <property type="entry name" value="Cell division cycle-like protein"/>
    <property type="match status" value="1"/>
</dbReference>
<dbReference type="FunFam" id="1.10.8.60:FF:000069">
    <property type="entry name" value="spermatogenesis-associated protein 5 isoform X1"/>
    <property type="match status" value="1"/>
</dbReference>
<dbReference type="FunFam" id="3.40.50.300:FF:000012">
    <property type="entry name" value="Transitional endoplasmic reticulum ATPase"/>
    <property type="match status" value="1"/>
</dbReference>
<dbReference type="Gene3D" id="1.10.8.60">
    <property type="match status" value="2"/>
</dbReference>
<dbReference type="Gene3D" id="3.40.50.300">
    <property type="entry name" value="P-loop containing nucleotide triphosphate hydrolases"/>
    <property type="match status" value="2"/>
</dbReference>
<dbReference type="InterPro" id="IPR003593">
    <property type="entry name" value="AAA+_ATPase"/>
</dbReference>
<dbReference type="InterPro" id="IPR050168">
    <property type="entry name" value="AAA_ATPase_domain"/>
</dbReference>
<dbReference type="InterPro" id="IPR041569">
    <property type="entry name" value="AAA_lid_3"/>
</dbReference>
<dbReference type="InterPro" id="IPR003959">
    <property type="entry name" value="ATPase_AAA_core"/>
</dbReference>
<dbReference type="InterPro" id="IPR003960">
    <property type="entry name" value="ATPase_AAA_CS"/>
</dbReference>
<dbReference type="InterPro" id="IPR027417">
    <property type="entry name" value="P-loop_NTPase"/>
</dbReference>
<dbReference type="PANTHER" id="PTHR23077">
    <property type="entry name" value="AAA-FAMILY ATPASE"/>
    <property type="match status" value="1"/>
</dbReference>
<dbReference type="PANTHER" id="PTHR23077:SF27">
    <property type="entry name" value="ATPASE FAMILY GENE 2 PROTEIN HOMOLOG A"/>
    <property type="match status" value="1"/>
</dbReference>
<dbReference type="Pfam" id="PF00004">
    <property type="entry name" value="AAA"/>
    <property type="match status" value="2"/>
</dbReference>
<dbReference type="Pfam" id="PF17862">
    <property type="entry name" value="AAA_lid_3"/>
    <property type="match status" value="2"/>
</dbReference>
<dbReference type="SMART" id="SM00382">
    <property type="entry name" value="AAA"/>
    <property type="match status" value="2"/>
</dbReference>
<dbReference type="SUPFAM" id="SSF52540">
    <property type="entry name" value="P-loop containing nucleoside triphosphate hydrolases"/>
    <property type="match status" value="2"/>
</dbReference>
<dbReference type="PROSITE" id="PS00674">
    <property type="entry name" value="AAA"/>
    <property type="match status" value="2"/>
</dbReference>
<protein>
    <recommendedName>
        <fullName evidence="1">ATPase family gene 2 protein</fullName>
        <ecNumber evidence="1">3.6.4.10</ecNumber>
    </recommendedName>
</protein>
<accession>O60058</accession>
<keyword id="KW-0067">ATP-binding</keyword>
<keyword id="KW-0143">Chaperone</keyword>
<keyword id="KW-0963">Cytoplasm</keyword>
<keyword id="KW-0378">Hydrolase</keyword>
<keyword id="KW-0547">Nucleotide-binding</keyword>
<keyword id="KW-1185">Reference proteome</keyword>
<keyword id="KW-0677">Repeat</keyword>
<organism>
    <name type="scientific">Schizosaccharomyces pombe (strain 972 / ATCC 24843)</name>
    <name type="common">Fission yeast</name>
    <dbReference type="NCBI Taxonomy" id="284812"/>
    <lineage>
        <taxon>Eukaryota</taxon>
        <taxon>Fungi</taxon>
        <taxon>Dikarya</taxon>
        <taxon>Ascomycota</taxon>
        <taxon>Taphrinomycotina</taxon>
        <taxon>Schizosaccharomycetes</taxon>
        <taxon>Schizosaccharomycetales</taxon>
        <taxon>Schizosaccharomycetaceae</taxon>
        <taxon>Schizosaccharomyces</taxon>
    </lineage>
</organism>
<proteinExistence type="inferred from homology"/>
<evidence type="ECO:0000250" key="1">
    <source>
        <dbReference type="UniProtKB" id="P32794"/>
    </source>
</evidence>
<evidence type="ECO:0000256" key="2">
    <source>
        <dbReference type="SAM" id="MobiDB-lite"/>
    </source>
</evidence>
<evidence type="ECO:0000269" key="3">
    <source>
    </source>
</evidence>
<evidence type="ECO:0000305" key="4"/>
<comment type="function">
    <text evidence="1">ATP-dependent chaperone which uses the energy provided by ATP hydrolysis to generate mechanical force to disassemble protein complexes. Plays an essential role in the cytoplasmic maturation steps of pre-60S ribosomal particles by promoting the release of shuttling protein rlp24 from the pre-ribosomal particles. This step facilitates the subsequent release of other shuttling proteins such as nog1 and allows the transition of the pre-ribosomal particles to later maturation forms that bind SPCC550.15c/REI1.</text>
</comment>
<comment type="catalytic activity">
    <reaction evidence="1">
        <text>ATP + H2O = ADP + phosphate + H(+)</text>
        <dbReference type="Rhea" id="RHEA:13065"/>
        <dbReference type="ChEBI" id="CHEBI:15377"/>
        <dbReference type="ChEBI" id="CHEBI:15378"/>
        <dbReference type="ChEBI" id="CHEBI:30616"/>
        <dbReference type="ChEBI" id="CHEBI:43474"/>
        <dbReference type="ChEBI" id="CHEBI:456216"/>
        <dbReference type="EC" id="3.6.4.10"/>
    </reaction>
</comment>
<comment type="subunit">
    <text evidence="1">Homohexamer; ATP binding induces oligomerization. Forms a ring-shaped particle of about 12 nm diameter, that displays 6-fold radial symmetry. Associates with cytoplasmic pre-60S ribosomal particles.</text>
</comment>
<comment type="subcellular location">
    <subcellularLocation>
        <location evidence="3">Cytoplasm</location>
    </subcellularLocation>
</comment>
<comment type="domain">
    <text evidence="1">The first ATP-binding region binds ATP with low affinity whereas the second ATP-binding region binds ATP with high affinity.</text>
</comment>
<comment type="similarity">
    <text evidence="4">Belongs to the AAA ATPase family. AFG2 subfamily.</text>
</comment>
<feature type="chain" id="PRO_0000310282" description="ATPase family gene 2 protein">
    <location>
        <begin position="1"/>
        <end position="809"/>
    </location>
</feature>
<feature type="region of interest" description="Disordered" evidence="2">
    <location>
        <begin position="169"/>
        <end position="199"/>
    </location>
</feature>
<feature type="compositionally biased region" description="Low complexity" evidence="2">
    <location>
        <begin position="170"/>
        <end position="186"/>
    </location>
</feature>
<feature type="binding site" evidence="1">
    <location>
        <begin position="320"/>
        <end position="327"/>
    </location>
    <ligand>
        <name>ATP</name>
        <dbReference type="ChEBI" id="CHEBI:30616"/>
        <label>1</label>
    </ligand>
</feature>
<feature type="binding site" evidence="1">
    <location>
        <begin position="589"/>
        <end position="596"/>
    </location>
    <ligand>
        <name>ATP</name>
        <dbReference type="ChEBI" id="CHEBI:30616"/>
        <label>2</label>
    </ligand>
</feature>
<gene>
    <name type="primary">afg2</name>
    <name type="ORF">SPBC56F2.07c</name>
</gene>
<sequence>MSVAIKFTVKINDGSLRRQQTRHVFLSPAALNRLKLSPSQVIYLKHKGGEAVGITQSVKGNGIGPFEILISPLLAKWANLKAFQRVNISQYVHPLKEAEGIKIVASLSSNNEPIPESLIRKELLEIRYLHPGMIVMGESPMNMAKSGSKNLSSENMATEIFEINSGLSAQSGTEVGSSQSSPSVNESEPKATEDLDELSPGSYKVKEIHIRSPSNLIEAISDMSLDEPRIYKFTAASSMEIETPDLLKLPHEDRTQSAYNQGSEETQNFDGPPSAVTFSSIGGLQAQIAQIRDIVELPFQNPELFKFFNIMPPRGVLLYGPPGTGKTMVMRAVAAEANAQVFTIDGPSVVGKYLGETESRLRKIFEDARAHQPSIIFIDEIDALAPKRTEDVSEAESRAVATLLTLLDGMANAGKVVVIAATNRPNSIDEALRRPGRLEKEIEIGIPDKSARLDIIKLLLSGVPNEINDAQLEDLASRTHAYVGADLAAVVREAALRAIKRTISLQKDTSGLDIFGAVQMDDLEFALSSVRQSAMREFMMESPNVHWSDIGGQEEVKQKLKESVEWPLTHGETFSRLGVRPPKGVLLYGPPGCSKTITAKAIATETGLNFIAVKGPELFDKFVGESERAVRQVFQKARQASPSVIFFDEIDALTANRGEDNSSDRVVAALLNELDGIEALRNVLVLAATNRPDMIDPALMRPGRLDRLLYVGPPNFEARKQIVKIQAEKMKFAEDVDLDLIAEKTEGCSGAEVVALCQEAGLIAMHEDLEAKEICQAHFKTALLALRKAITRDMLEYYASFSESVTSIS</sequence>